<gene>
    <name type="ordered locus">SGO_0625</name>
</gene>
<accession>A8AVW8</accession>
<protein>
    <recommendedName>
        <fullName evidence="1">Nucleoside triphosphate/diphosphate phosphatase</fullName>
        <ecNumber evidence="1">3.6.1.15</ecNumber>
        <ecNumber evidence="1">3.6.1.6</ecNumber>
    </recommendedName>
</protein>
<comment type="function">
    <text evidence="1">Has nucleoside phosphatase activity towards nucleoside triphosphates and nucleoside diphosphates.</text>
</comment>
<comment type="catalytic activity">
    <reaction evidence="1">
        <text>a ribonucleoside 5'-triphosphate + H2O = a ribonucleoside 5'-diphosphate + phosphate + H(+)</text>
        <dbReference type="Rhea" id="RHEA:23680"/>
        <dbReference type="ChEBI" id="CHEBI:15377"/>
        <dbReference type="ChEBI" id="CHEBI:15378"/>
        <dbReference type="ChEBI" id="CHEBI:43474"/>
        <dbReference type="ChEBI" id="CHEBI:57930"/>
        <dbReference type="ChEBI" id="CHEBI:61557"/>
        <dbReference type="EC" id="3.6.1.15"/>
    </reaction>
</comment>
<comment type="catalytic activity">
    <reaction evidence="1">
        <text>a ribonucleoside 5'-diphosphate + H2O = a ribonucleoside 5'-phosphate + phosphate + H(+)</text>
        <dbReference type="Rhea" id="RHEA:36799"/>
        <dbReference type="ChEBI" id="CHEBI:15377"/>
        <dbReference type="ChEBI" id="CHEBI:15378"/>
        <dbReference type="ChEBI" id="CHEBI:43474"/>
        <dbReference type="ChEBI" id="CHEBI:57930"/>
        <dbReference type="ChEBI" id="CHEBI:58043"/>
        <dbReference type="EC" id="3.6.1.6"/>
    </reaction>
</comment>
<comment type="cofactor">
    <cofactor evidence="1">
        <name>Mg(2+)</name>
        <dbReference type="ChEBI" id="CHEBI:18420"/>
    </cofactor>
</comment>
<comment type="similarity">
    <text evidence="1">Belongs to the Ntdp family.</text>
</comment>
<dbReference type="EC" id="3.6.1.15" evidence="1"/>
<dbReference type="EC" id="3.6.1.6" evidence="1"/>
<dbReference type="EMBL" id="CP000725">
    <property type="protein sequence ID" value="ABV09851.1"/>
    <property type="molecule type" value="Genomic_DNA"/>
</dbReference>
<dbReference type="RefSeq" id="WP_012000105.1">
    <property type="nucleotide sequence ID" value="NC_009785.1"/>
</dbReference>
<dbReference type="SMR" id="A8AVW8"/>
<dbReference type="STRING" id="467705.SGO_0625"/>
<dbReference type="KEGG" id="sgo:SGO_0625"/>
<dbReference type="eggNOG" id="COG3557">
    <property type="taxonomic scope" value="Bacteria"/>
</dbReference>
<dbReference type="HOGENOM" id="CLU_109787_1_0_9"/>
<dbReference type="Proteomes" id="UP000001131">
    <property type="component" value="Chromosome"/>
</dbReference>
<dbReference type="GO" id="GO:0000287">
    <property type="term" value="F:magnesium ion binding"/>
    <property type="evidence" value="ECO:0007669"/>
    <property type="project" value="UniProtKB-UniRule"/>
</dbReference>
<dbReference type="GO" id="GO:0017110">
    <property type="term" value="F:nucleoside diphosphate phosphatase activity"/>
    <property type="evidence" value="ECO:0007669"/>
    <property type="project" value="UniProtKB-UniRule"/>
</dbReference>
<dbReference type="GO" id="GO:0017111">
    <property type="term" value="F:ribonucleoside triphosphate phosphatase activity"/>
    <property type="evidence" value="ECO:0007669"/>
    <property type="project" value="UniProtKB-UniRule"/>
</dbReference>
<dbReference type="Gene3D" id="2.40.380.10">
    <property type="entry name" value="FomD-like"/>
    <property type="match status" value="1"/>
</dbReference>
<dbReference type="HAMAP" id="MF_01568">
    <property type="entry name" value="Ntdp"/>
    <property type="match status" value="1"/>
</dbReference>
<dbReference type="InterPro" id="IPR007295">
    <property type="entry name" value="DUF402"/>
</dbReference>
<dbReference type="InterPro" id="IPR035930">
    <property type="entry name" value="FomD-like_sf"/>
</dbReference>
<dbReference type="InterPro" id="IPR050212">
    <property type="entry name" value="Ntdp-like"/>
</dbReference>
<dbReference type="InterPro" id="IPR016882">
    <property type="entry name" value="SA1684"/>
</dbReference>
<dbReference type="NCBIfam" id="NF010183">
    <property type="entry name" value="PRK13662.1"/>
    <property type="match status" value="1"/>
</dbReference>
<dbReference type="PANTHER" id="PTHR39159">
    <property type="match status" value="1"/>
</dbReference>
<dbReference type="PANTHER" id="PTHR39159:SF1">
    <property type="entry name" value="UPF0374 PROTEIN YGAC"/>
    <property type="match status" value="1"/>
</dbReference>
<dbReference type="Pfam" id="PF04167">
    <property type="entry name" value="DUF402"/>
    <property type="match status" value="1"/>
</dbReference>
<dbReference type="PIRSF" id="PIRSF028345">
    <property type="entry name" value="UCP028345"/>
    <property type="match status" value="1"/>
</dbReference>
<dbReference type="SUPFAM" id="SSF159234">
    <property type="entry name" value="FomD-like"/>
    <property type="match status" value="1"/>
</dbReference>
<proteinExistence type="inferred from homology"/>
<organism>
    <name type="scientific">Streptococcus gordonii (strain Challis / ATCC 35105 / BCRC 15272 / CH1 / DL1 / V288)</name>
    <dbReference type="NCBI Taxonomy" id="467705"/>
    <lineage>
        <taxon>Bacteria</taxon>
        <taxon>Bacillati</taxon>
        <taxon>Bacillota</taxon>
        <taxon>Bacilli</taxon>
        <taxon>Lactobacillales</taxon>
        <taxon>Streptococcaceae</taxon>
        <taxon>Streptococcus</taxon>
    </lineage>
</organism>
<name>NTDP_STRGC</name>
<keyword id="KW-0378">Hydrolase</keyword>
<keyword id="KW-0460">Magnesium</keyword>
<keyword id="KW-0479">Metal-binding</keyword>
<keyword id="KW-1185">Reference proteome</keyword>
<feature type="chain" id="PRO_1000087831" description="Nucleoside triphosphate/diphosphate phosphatase">
    <location>
        <begin position="1"/>
        <end position="177"/>
    </location>
</feature>
<feature type="active site" description="Proton donor" evidence="1">
    <location>
        <position position="23"/>
    </location>
</feature>
<feature type="binding site" evidence="1">
    <location>
        <position position="87"/>
    </location>
    <ligand>
        <name>Mg(2+)</name>
        <dbReference type="ChEBI" id="CHEBI:18420"/>
        <label>1</label>
    </ligand>
</feature>
<feature type="binding site" evidence="1">
    <location>
        <position position="103"/>
    </location>
    <ligand>
        <name>Mg(2+)</name>
        <dbReference type="ChEBI" id="CHEBI:18420"/>
        <label>1</label>
    </ligand>
</feature>
<feature type="binding site" evidence="1">
    <location>
        <position position="105"/>
    </location>
    <ligand>
        <name>Mg(2+)</name>
        <dbReference type="ChEBI" id="CHEBI:18420"/>
        <label>2</label>
    </ligand>
</feature>
<feature type="binding site" evidence="1">
    <location>
        <position position="107"/>
    </location>
    <ligand>
        <name>Mg(2+)</name>
        <dbReference type="ChEBI" id="CHEBI:18420"/>
        <label>1</label>
    </ligand>
</feature>
<feature type="binding site" evidence="1">
    <location>
        <position position="107"/>
    </location>
    <ligand>
        <name>Mg(2+)</name>
        <dbReference type="ChEBI" id="CHEBI:18420"/>
        <label>2</label>
    </ligand>
</feature>
<feature type="binding site" evidence="1">
    <location>
        <position position="120"/>
    </location>
    <ligand>
        <name>Mg(2+)</name>
        <dbReference type="ChEBI" id="CHEBI:18420"/>
        <label>2</label>
    </ligand>
</feature>
<feature type="binding site" evidence="1">
    <location>
        <position position="123"/>
    </location>
    <ligand>
        <name>Mg(2+)</name>
        <dbReference type="ChEBI" id="CHEBI:18420"/>
        <label>2</label>
    </ligand>
</feature>
<sequence length="177" mass="21351">MRLPKEGDFITIQSYKHDGSLHRTWRDTMVLKTTENAIIGVNDHTLVTESDGRRWVTREPAIVYFHRKYWFNIIAMIRENGTSYYCNLASPYYLDSEALKYIDYDLDVKVFADGEKRLLDVEEYERHKKKMNYSNDLDYILKENVKILVDWINQERGPFSQAYVNIWYKRYIELKNR</sequence>
<evidence type="ECO:0000255" key="1">
    <source>
        <dbReference type="HAMAP-Rule" id="MF_01568"/>
    </source>
</evidence>
<reference key="1">
    <citation type="journal article" date="2007" name="J. Bacteriol.">
        <title>Genome-wide transcriptional changes in Streptococcus gordonii in response to competence signaling peptide.</title>
        <authorList>
            <person name="Vickerman M.M."/>
            <person name="Iobst S."/>
            <person name="Jesionowski A.M."/>
            <person name="Gill S.R."/>
        </authorList>
    </citation>
    <scope>NUCLEOTIDE SEQUENCE [LARGE SCALE GENOMIC DNA]</scope>
    <source>
        <strain>Challis / ATCC 35105 / BCRC 15272 / CH1 / DL1 / V288</strain>
    </source>
</reference>